<accession>Q3K9V5</accession>
<dbReference type="EMBL" id="CP000094">
    <property type="protein sequence ID" value="ABA75449.1"/>
    <property type="molecule type" value="Genomic_DNA"/>
</dbReference>
<dbReference type="RefSeq" id="WP_011335047.1">
    <property type="nucleotide sequence ID" value="NC_007492.2"/>
</dbReference>
<dbReference type="SMR" id="Q3K9V5"/>
<dbReference type="KEGG" id="pfo:Pfl01_3711"/>
<dbReference type="eggNOG" id="COG3132">
    <property type="taxonomic scope" value="Bacteria"/>
</dbReference>
<dbReference type="HOGENOM" id="CLU_057831_1_0_6"/>
<dbReference type="Proteomes" id="UP000002704">
    <property type="component" value="Chromosome"/>
</dbReference>
<dbReference type="Gene3D" id="1.10.10.10">
    <property type="entry name" value="Winged helix-like DNA-binding domain superfamily/Winged helix DNA-binding domain"/>
    <property type="match status" value="2"/>
</dbReference>
<dbReference type="HAMAP" id="MF_01584">
    <property type="entry name" value="UPF0502"/>
    <property type="match status" value="1"/>
</dbReference>
<dbReference type="InterPro" id="IPR007432">
    <property type="entry name" value="DUF480"/>
</dbReference>
<dbReference type="InterPro" id="IPR036388">
    <property type="entry name" value="WH-like_DNA-bd_sf"/>
</dbReference>
<dbReference type="InterPro" id="IPR036390">
    <property type="entry name" value="WH_DNA-bd_sf"/>
</dbReference>
<dbReference type="PANTHER" id="PTHR38768">
    <property type="entry name" value="UPF0502 PROTEIN YCEH"/>
    <property type="match status" value="1"/>
</dbReference>
<dbReference type="PANTHER" id="PTHR38768:SF1">
    <property type="entry name" value="UPF0502 PROTEIN YCEH"/>
    <property type="match status" value="1"/>
</dbReference>
<dbReference type="Pfam" id="PF04337">
    <property type="entry name" value="DUF480"/>
    <property type="match status" value="1"/>
</dbReference>
<dbReference type="SUPFAM" id="SSF46785">
    <property type="entry name" value="Winged helix' DNA-binding domain"/>
    <property type="match status" value="2"/>
</dbReference>
<feature type="chain" id="PRO_0000309406" description="UPF0502 protein Pfl01_3711">
    <location>
        <begin position="1"/>
        <end position="216"/>
    </location>
</feature>
<sequence length="216" mass="24143">MTTEFETRSDEPRLNATEIRILGSLIEKQATSPETYPLTLNALVLACNQKTSREPVMNLTQGQVGQSLRALESRGFAKLVMGSRADRWEHKVDKALELVPAQLILTGLMFLRGPQTVNELLTRSGRMHEFEDAEQVVHQLERLIARELAVLIPRQAGQREDRYTHALGDPADIEAIIAARQNPSDRGAASGVSVERIEELEARIAALEERLARLEE</sequence>
<reference key="1">
    <citation type="journal article" date="2009" name="Genome Biol.">
        <title>Genomic and genetic analyses of diversity and plant interactions of Pseudomonas fluorescens.</title>
        <authorList>
            <person name="Silby M.W."/>
            <person name="Cerdeno-Tarraga A.M."/>
            <person name="Vernikos G.S."/>
            <person name="Giddens S.R."/>
            <person name="Jackson R.W."/>
            <person name="Preston G.M."/>
            <person name="Zhang X.-X."/>
            <person name="Moon C.D."/>
            <person name="Gehrig S.M."/>
            <person name="Godfrey S.A.C."/>
            <person name="Knight C.G."/>
            <person name="Malone J.G."/>
            <person name="Robinson Z."/>
            <person name="Spiers A.J."/>
            <person name="Harris S."/>
            <person name="Challis G.L."/>
            <person name="Yaxley A.M."/>
            <person name="Harris D."/>
            <person name="Seeger K."/>
            <person name="Murphy L."/>
            <person name="Rutter S."/>
            <person name="Squares R."/>
            <person name="Quail M.A."/>
            <person name="Saunders E."/>
            <person name="Mavromatis K."/>
            <person name="Brettin T.S."/>
            <person name="Bentley S.D."/>
            <person name="Hothersall J."/>
            <person name="Stephens E."/>
            <person name="Thomas C.M."/>
            <person name="Parkhill J."/>
            <person name="Levy S.B."/>
            <person name="Rainey P.B."/>
            <person name="Thomson N.R."/>
        </authorList>
    </citation>
    <scope>NUCLEOTIDE SEQUENCE [LARGE SCALE GENOMIC DNA]</scope>
    <source>
        <strain>Pf0-1</strain>
    </source>
</reference>
<gene>
    <name type="ordered locus">Pfl01_3711</name>
</gene>
<comment type="similarity">
    <text evidence="1">Belongs to the UPF0502 family.</text>
</comment>
<proteinExistence type="inferred from homology"/>
<evidence type="ECO:0000255" key="1">
    <source>
        <dbReference type="HAMAP-Rule" id="MF_01584"/>
    </source>
</evidence>
<protein>
    <recommendedName>
        <fullName evidence="1">UPF0502 protein Pfl01_3711</fullName>
    </recommendedName>
</protein>
<name>Y3711_PSEPF</name>
<organism>
    <name type="scientific">Pseudomonas fluorescens (strain Pf0-1)</name>
    <dbReference type="NCBI Taxonomy" id="205922"/>
    <lineage>
        <taxon>Bacteria</taxon>
        <taxon>Pseudomonadati</taxon>
        <taxon>Pseudomonadota</taxon>
        <taxon>Gammaproteobacteria</taxon>
        <taxon>Pseudomonadales</taxon>
        <taxon>Pseudomonadaceae</taxon>
        <taxon>Pseudomonas</taxon>
    </lineage>
</organism>